<dbReference type="EC" id="2.5.1.3" evidence="1"/>
<dbReference type="EMBL" id="AE004439">
    <property type="protein sequence ID" value="AAK03344.1"/>
    <property type="molecule type" value="Genomic_DNA"/>
</dbReference>
<dbReference type="RefSeq" id="WP_010907096.1">
    <property type="nucleotide sequence ID" value="NC_002663.1"/>
</dbReference>
<dbReference type="SMR" id="P57930"/>
<dbReference type="STRING" id="272843.PM1260"/>
<dbReference type="EnsemblBacteria" id="AAK03344">
    <property type="protein sequence ID" value="AAK03344"/>
    <property type="gene ID" value="PM1260"/>
</dbReference>
<dbReference type="KEGG" id="pmu:PM1260"/>
<dbReference type="PATRIC" id="fig|272843.6.peg.1270"/>
<dbReference type="HOGENOM" id="CLU_018272_3_2_6"/>
<dbReference type="OrthoDB" id="9810880at2"/>
<dbReference type="UniPathway" id="UPA00060">
    <property type="reaction ID" value="UER00141"/>
</dbReference>
<dbReference type="Proteomes" id="UP000000809">
    <property type="component" value="Chromosome"/>
</dbReference>
<dbReference type="GO" id="GO:0005737">
    <property type="term" value="C:cytoplasm"/>
    <property type="evidence" value="ECO:0007669"/>
    <property type="project" value="TreeGrafter"/>
</dbReference>
<dbReference type="GO" id="GO:0000287">
    <property type="term" value="F:magnesium ion binding"/>
    <property type="evidence" value="ECO:0007669"/>
    <property type="project" value="UniProtKB-UniRule"/>
</dbReference>
<dbReference type="GO" id="GO:0004789">
    <property type="term" value="F:thiamine-phosphate diphosphorylase activity"/>
    <property type="evidence" value="ECO:0007669"/>
    <property type="project" value="UniProtKB-UniRule"/>
</dbReference>
<dbReference type="GO" id="GO:0009228">
    <property type="term" value="P:thiamine biosynthetic process"/>
    <property type="evidence" value="ECO:0007669"/>
    <property type="project" value="UniProtKB-KW"/>
</dbReference>
<dbReference type="GO" id="GO:0009229">
    <property type="term" value="P:thiamine diphosphate biosynthetic process"/>
    <property type="evidence" value="ECO:0007669"/>
    <property type="project" value="UniProtKB-UniRule"/>
</dbReference>
<dbReference type="CDD" id="cd00564">
    <property type="entry name" value="TMP_TenI"/>
    <property type="match status" value="1"/>
</dbReference>
<dbReference type="FunFam" id="3.20.20.70:FF:000096">
    <property type="entry name" value="Thiamine-phosphate synthase"/>
    <property type="match status" value="1"/>
</dbReference>
<dbReference type="Gene3D" id="3.20.20.70">
    <property type="entry name" value="Aldolase class I"/>
    <property type="match status" value="1"/>
</dbReference>
<dbReference type="HAMAP" id="MF_00097">
    <property type="entry name" value="TMP_synthase"/>
    <property type="match status" value="1"/>
</dbReference>
<dbReference type="InterPro" id="IPR013785">
    <property type="entry name" value="Aldolase_TIM"/>
</dbReference>
<dbReference type="InterPro" id="IPR036206">
    <property type="entry name" value="ThiamineP_synth_sf"/>
</dbReference>
<dbReference type="InterPro" id="IPR022998">
    <property type="entry name" value="ThiamineP_synth_TenI"/>
</dbReference>
<dbReference type="InterPro" id="IPR034291">
    <property type="entry name" value="TMP_synthase"/>
</dbReference>
<dbReference type="NCBIfam" id="TIGR00693">
    <property type="entry name" value="thiE"/>
    <property type="match status" value="1"/>
</dbReference>
<dbReference type="PANTHER" id="PTHR20857">
    <property type="entry name" value="THIAMINE-PHOSPHATE PYROPHOSPHORYLASE"/>
    <property type="match status" value="1"/>
</dbReference>
<dbReference type="PANTHER" id="PTHR20857:SF15">
    <property type="entry name" value="THIAMINE-PHOSPHATE SYNTHASE"/>
    <property type="match status" value="1"/>
</dbReference>
<dbReference type="Pfam" id="PF02581">
    <property type="entry name" value="TMP-TENI"/>
    <property type="match status" value="1"/>
</dbReference>
<dbReference type="SUPFAM" id="SSF51391">
    <property type="entry name" value="Thiamin phosphate synthase"/>
    <property type="match status" value="1"/>
</dbReference>
<organism>
    <name type="scientific">Pasteurella multocida (strain Pm70)</name>
    <dbReference type="NCBI Taxonomy" id="272843"/>
    <lineage>
        <taxon>Bacteria</taxon>
        <taxon>Pseudomonadati</taxon>
        <taxon>Pseudomonadota</taxon>
        <taxon>Gammaproteobacteria</taxon>
        <taxon>Pasteurellales</taxon>
        <taxon>Pasteurellaceae</taxon>
        <taxon>Pasteurella</taxon>
    </lineage>
</organism>
<reference key="1">
    <citation type="journal article" date="2001" name="Proc. Natl. Acad. Sci. U.S.A.">
        <title>Complete genomic sequence of Pasteurella multocida Pm70.</title>
        <authorList>
            <person name="May B.J."/>
            <person name="Zhang Q."/>
            <person name="Li L.L."/>
            <person name="Paustian M.L."/>
            <person name="Whittam T.S."/>
            <person name="Kapur V."/>
        </authorList>
    </citation>
    <scope>NUCLEOTIDE SEQUENCE [LARGE SCALE GENOMIC DNA]</scope>
    <source>
        <strain>Pm70</strain>
    </source>
</reference>
<gene>
    <name evidence="1" type="primary">thiE</name>
    <name type="ordered locus">PM1260</name>
</gene>
<sequence length="221" mass="23736">MKPVHAFMRLYFIAGTQDCLHLDGDPAQNLLNILQQALQSGITCYQFREKGKKALQDPDKIKALAIQCRDLCRQYQVPFVVNDDVQLAIDIGADGIHVGQTDMAVADVAALCHSHCFIGTSVNTLEQGIAAQANPLIDYFGTGPIFPTQSKEDPKPVVGVDFVSTIRAHGIDKPIVAIGGVTTQTAEELRRRGANGVAVISAITQSADIAKTVKELLGNAQ</sequence>
<evidence type="ECO:0000255" key="1">
    <source>
        <dbReference type="HAMAP-Rule" id="MF_00097"/>
    </source>
</evidence>
<proteinExistence type="inferred from homology"/>
<feature type="chain" id="PRO_0000157033" description="Thiamine-phosphate synthase">
    <location>
        <begin position="1"/>
        <end position="221"/>
    </location>
</feature>
<feature type="binding site" evidence="1">
    <location>
        <begin position="46"/>
        <end position="50"/>
    </location>
    <ligand>
        <name>4-amino-2-methyl-5-(diphosphooxymethyl)pyrimidine</name>
        <dbReference type="ChEBI" id="CHEBI:57841"/>
    </ligand>
</feature>
<feature type="binding site" evidence="1">
    <location>
        <position position="82"/>
    </location>
    <ligand>
        <name>4-amino-2-methyl-5-(diphosphooxymethyl)pyrimidine</name>
        <dbReference type="ChEBI" id="CHEBI:57841"/>
    </ligand>
</feature>
<feature type="binding site" evidence="1">
    <location>
        <position position="83"/>
    </location>
    <ligand>
        <name>Mg(2+)</name>
        <dbReference type="ChEBI" id="CHEBI:18420"/>
    </ligand>
</feature>
<feature type="binding site" evidence="1">
    <location>
        <position position="102"/>
    </location>
    <ligand>
        <name>Mg(2+)</name>
        <dbReference type="ChEBI" id="CHEBI:18420"/>
    </ligand>
</feature>
<feature type="binding site" evidence="1">
    <location>
        <position position="121"/>
    </location>
    <ligand>
        <name>4-amino-2-methyl-5-(diphosphooxymethyl)pyrimidine</name>
        <dbReference type="ChEBI" id="CHEBI:57841"/>
    </ligand>
</feature>
<feature type="binding site" evidence="1">
    <location>
        <begin position="148"/>
        <end position="150"/>
    </location>
    <ligand>
        <name>2-[(2R,5Z)-2-carboxy-4-methylthiazol-5(2H)-ylidene]ethyl phosphate</name>
        <dbReference type="ChEBI" id="CHEBI:62899"/>
    </ligand>
</feature>
<feature type="binding site" evidence="1">
    <location>
        <position position="151"/>
    </location>
    <ligand>
        <name>4-amino-2-methyl-5-(diphosphooxymethyl)pyrimidine</name>
        <dbReference type="ChEBI" id="CHEBI:57841"/>
    </ligand>
</feature>
<feature type="binding site" evidence="1">
    <location>
        <position position="180"/>
    </location>
    <ligand>
        <name>2-[(2R,5Z)-2-carboxy-4-methylthiazol-5(2H)-ylidene]ethyl phosphate</name>
        <dbReference type="ChEBI" id="CHEBI:62899"/>
    </ligand>
</feature>
<feature type="binding site" evidence="1">
    <location>
        <begin position="200"/>
        <end position="201"/>
    </location>
    <ligand>
        <name>2-[(2R,5Z)-2-carboxy-4-methylthiazol-5(2H)-ylidene]ethyl phosphate</name>
        <dbReference type="ChEBI" id="CHEBI:62899"/>
    </ligand>
</feature>
<accession>P57930</accession>
<comment type="function">
    <text evidence="1">Condenses 4-methyl-5-(beta-hydroxyethyl)thiazole monophosphate (THZ-P) and 2-methyl-4-amino-5-hydroxymethyl pyrimidine pyrophosphate (HMP-PP) to form thiamine monophosphate (TMP).</text>
</comment>
<comment type="catalytic activity">
    <reaction evidence="1">
        <text>2-[(2R,5Z)-2-carboxy-4-methylthiazol-5(2H)-ylidene]ethyl phosphate + 4-amino-2-methyl-5-(diphosphooxymethyl)pyrimidine + 2 H(+) = thiamine phosphate + CO2 + diphosphate</text>
        <dbReference type="Rhea" id="RHEA:47844"/>
        <dbReference type="ChEBI" id="CHEBI:15378"/>
        <dbReference type="ChEBI" id="CHEBI:16526"/>
        <dbReference type="ChEBI" id="CHEBI:33019"/>
        <dbReference type="ChEBI" id="CHEBI:37575"/>
        <dbReference type="ChEBI" id="CHEBI:57841"/>
        <dbReference type="ChEBI" id="CHEBI:62899"/>
        <dbReference type="EC" id="2.5.1.3"/>
    </reaction>
</comment>
<comment type="catalytic activity">
    <reaction evidence="1">
        <text>2-(2-carboxy-4-methylthiazol-5-yl)ethyl phosphate + 4-amino-2-methyl-5-(diphosphooxymethyl)pyrimidine + 2 H(+) = thiamine phosphate + CO2 + diphosphate</text>
        <dbReference type="Rhea" id="RHEA:47848"/>
        <dbReference type="ChEBI" id="CHEBI:15378"/>
        <dbReference type="ChEBI" id="CHEBI:16526"/>
        <dbReference type="ChEBI" id="CHEBI:33019"/>
        <dbReference type="ChEBI" id="CHEBI:37575"/>
        <dbReference type="ChEBI" id="CHEBI:57841"/>
        <dbReference type="ChEBI" id="CHEBI:62890"/>
        <dbReference type="EC" id="2.5.1.3"/>
    </reaction>
</comment>
<comment type="catalytic activity">
    <reaction evidence="1">
        <text>4-methyl-5-(2-phosphooxyethyl)-thiazole + 4-amino-2-methyl-5-(diphosphooxymethyl)pyrimidine + H(+) = thiamine phosphate + diphosphate</text>
        <dbReference type="Rhea" id="RHEA:22328"/>
        <dbReference type="ChEBI" id="CHEBI:15378"/>
        <dbReference type="ChEBI" id="CHEBI:33019"/>
        <dbReference type="ChEBI" id="CHEBI:37575"/>
        <dbReference type="ChEBI" id="CHEBI:57841"/>
        <dbReference type="ChEBI" id="CHEBI:58296"/>
        <dbReference type="EC" id="2.5.1.3"/>
    </reaction>
</comment>
<comment type="cofactor">
    <cofactor evidence="1">
        <name>Mg(2+)</name>
        <dbReference type="ChEBI" id="CHEBI:18420"/>
    </cofactor>
    <text evidence="1">Binds 1 Mg(2+) ion per subunit.</text>
</comment>
<comment type="pathway">
    <text evidence="1">Cofactor biosynthesis; thiamine diphosphate biosynthesis; thiamine phosphate from 4-amino-2-methyl-5-diphosphomethylpyrimidine and 4-methyl-5-(2-phosphoethyl)-thiazole: step 1/1.</text>
</comment>
<comment type="similarity">
    <text evidence="1">Belongs to the thiamine-phosphate synthase family.</text>
</comment>
<name>THIE_PASMU</name>
<protein>
    <recommendedName>
        <fullName evidence="1">Thiamine-phosphate synthase</fullName>
        <shortName evidence="1">TP synthase</shortName>
        <shortName evidence="1">TPS</shortName>
        <ecNumber evidence="1">2.5.1.3</ecNumber>
    </recommendedName>
    <alternativeName>
        <fullName evidence="1">Thiamine-phosphate pyrophosphorylase</fullName>
        <shortName evidence="1">TMP pyrophosphorylase</shortName>
        <shortName evidence="1">TMP-PPase</shortName>
    </alternativeName>
</protein>
<keyword id="KW-0460">Magnesium</keyword>
<keyword id="KW-0479">Metal-binding</keyword>
<keyword id="KW-1185">Reference proteome</keyword>
<keyword id="KW-0784">Thiamine biosynthesis</keyword>
<keyword id="KW-0808">Transferase</keyword>